<accession>Q55522</accession>
<feature type="chain" id="PRO_0000106237" description="Valine--tRNA ligase">
    <location>
        <begin position="1"/>
        <end position="910"/>
    </location>
</feature>
<feature type="coiled-coil region" evidence="1">
    <location>
        <begin position="845"/>
        <end position="909"/>
    </location>
</feature>
<feature type="short sequence motif" description="'HIGH' region">
    <location>
        <begin position="46"/>
        <end position="56"/>
    </location>
</feature>
<feature type="short sequence motif" description="'KMSKS' region">
    <location>
        <begin position="539"/>
        <end position="543"/>
    </location>
</feature>
<feature type="binding site" evidence="1">
    <location>
        <position position="542"/>
    </location>
    <ligand>
        <name>ATP</name>
        <dbReference type="ChEBI" id="CHEBI:30616"/>
    </ligand>
</feature>
<gene>
    <name evidence="1" type="primary">valS</name>
    <name type="ordered locus">slr0557</name>
</gene>
<comment type="function">
    <text evidence="1">Catalyzes the attachment of valine to tRNA(Val). As ValRS can inadvertently accommodate and process structurally similar amino acids such as threonine, to avoid such errors, it has a 'posttransfer' editing activity that hydrolyzes mischarged Thr-tRNA(Val) in a tRNA-dependent manner.</text>
</comment>
<comment type="catalytic activity">
    <reaction evidence="1">
        <text>tRNA(Val) + L-valine + ATP = L-valyl-tRNA(Val) + AMP + diphosphate</text>
        <dbReference type="Rhea" id="RHEA:10704"/>
        <dbReference type="Rhea" id="RHEA-COMP:9672"/>
        <dbReference type="Rhea" id="RHEA-COMP:9708"/>
        <dbReference type="ChEBI" id="CHEBI:30616"/>
        <dbReference type="ChEBI" id="CHEBI:33019"/>
        <dbReference type="ChEBI" id="CHEBI:57762"/>
        <dbReference type="ChEBI" id="CHEBI:78442"/>
        <dbReference type="ChEBI" id="CHEBI:78537"/>
        <dbReference type="ChEBI" id="CHEBI:456215"/>
        <dbReference type="EC" id="6.1.1.9"/>
    </reaction>
</comment>
<comment type="subunit">
    <text evidence="1">Monomer.</text>
</comment>
<comment type="subcellular location">
    <subcellularLocation>
        <location evidence="1">Cytoplasm</location>
    </subcellularLocation>
</comment>
<comment type="domain">
    <text evidence="1">ValRS has two distinct active sites: one for aminoacylation and one for editing. The misactivated threonine is translocated from the active site to the editing site.</text>
</comment>
<comment type="domain">
    <text evidence="1">The C-terminal coiled-coil domain is crucial for aminoacylation activity.</text>
</comment>
<comment type="similarity">
    <text evidence="1">Belongs to the class-I aminoacyl-tRNA synthetase family. ValS type 1 subfamily.</text>
</comment>
<dbReference type="EC" id="6.1.1.9" evidence="1"/>
<dbReference type="EMBL" id="BA000022">
    <property type="protein sequence ID" value="BAA10881.1"/>
    <property type="molecule type" value="Genomic_DNA"/>
</dbReference>
<dbReference type="PIR" id="S76034">
    <property type="entry name" value="S76034"/>
</dbReference>
<dbReference type="SMR" id="Q55522"/>
<dbReference type="FunCoup" id="Q55522">
    <property type="interactions" value="482"/>
</dbReference>
<dbReference type="IntAct" id="Q55522">
    <property type="interactions" value="2"/>
</dbReference>
<dbReference type="STRING" id="1148.gene:10500387"/>
<dbReference type="PaxDb" id="1148-1001391"/>
<dbReference type="EnsemblBacteria" id="BAA10881">
    <property type="protein sequence ID" value="BAA10881"/>
    <property type="gene ID" value="BAA10881"/>
</dbReference>
<dbReference type="KEGG" id="syn:slr0557"/>
<dbReference type="eggNOG" id="COG0525">
    <property type="taxonomic scope" value="Bacteria"/>
</dbReference>
<dbReference type="InParanoid" id="Q55522"/>
<dbReference type="PhylomeDB" id="Q55522"/>
<dbReference type="Proteomes" id="UP000001425">
    <property type="component" value="Chromosome"/>
</dbReference>
<dbReference type="GO" id="GO:0005829">
    <property type="term" value="C:cytosol"/>
    <property type="evidence" value="ECO:0000318"/>
    <property type="project" value="GO_Central"/>
</dbReference>
<dbReference type="GO" id="GO:0002161">
    <property type="term" value="F:aminoacyl-tRNA deacylase activity"/>
    <property type="evidence" value="ECO:0007669"/>
    <property type="project" value="InterPro"/>
</dbReference>
<dbReference type="GO" id="GO:0005524">
    <property type="term" value="F:ATP binding"/>
    <property type="evidence" value="ECO:0007669"/>
    <property type="project" value="UniProtKB-UniRule"/>
</dbReference>
<dbReference type="GO" id="GO:0004822">
    <property type="term" value="F:isoleucine-tRNA ligase activity"/>
    <property type="evidence" value="ECO:0000318"/>
    <property type="project" value="GO_Central"/>
</dbReference>
<dbReference type="GO" id="GO:0004832">
    <property type="term" value="F:valine-tRNA ligase activity"/>
    <property type="evidence" value="ECO:0007669"/>
    <property type="project" value="UniProtKB-UniRule"/>
</dbReference>
<dbReference type="GO" id="GO:0006428">
    <property type="term" value="P:isoleucyl-tRNA aminoacylation"/>
    <property type="evidence" value="ECO:0000318"/>
    <property type="project" value="GO_Central"/>
</dbReference>
<dbReference type="GO" id="GO:0006438">
    <property type="term" value="P:valyl-tRNA aminoacylation"/>
    <property type="evidence" value="ECO:0007669"/>
    <property type="project" value="UniProtKB-UniRule"/>
</dbReference>
<dbReference type="CDD" id="cd07962">
    <property type="entry name" value="Anticodon_Ia_Val"/>
    <property type="match status" value="1"/>
</dbReference>
<dbReference type="CDD" id="cd00817">
    <property type="entry name" value="ValRS_core"/>
    <property type="match status" value="1"/>
</dbReference>
<dbReference type="FunFam" id="1.10.287.380:FF:000001">
    <property type="entry name" value="Valine--tRNA ligase"/>
    <property type="match status" value="1"/>
</dbReference>
<dbReference type="FunFam" id="1.10.730.10:FF:000102">
    <property type="entry name" value="Valine--tRNA ligase"/>
    <property type="match status" value="1"/>
</dbReference>
<dbReference type="FunFam" id="3.40.50.620:FF:000032">
    <property type="entry name" value="Valine--tRNA ligase"/>
    <property type="match status" value="1"/>
</dbReference>
<dbReference type="FunFam" id="3.40.50.620:FF:000078">
    <property type="entry name" value="Valine--tRNA ligase, mitochondrial"/>
    <property type="match status" value="1"/>
</dbReference>
<dbReference type="FunFam" id="3.90.740.10:FF:000005">
    <property type="entry name" value="Valine--tRNA ligase, mitochondrial"/>
    <property type="match status" value="1"/>
</dbReference>
<dbReference type="Gene3D" id="3.40.50.620">
    <property type="entry name" value="HUPs"/>
    <property type="match status" value="2"/>
</dbReference>
<dbReference type="Gene3D" id="1.10.730.10">
    <property type="entry name" value="Isoleucyl-tRNA Synthetase, Domain 1"/>
    <property type="match status" value="1"/>
</dbReference>
<dbReference type="Gene3D" id="1.10.287.380">
    <property type="entry name" value="Valyl-tRNA synthetase, C-terminal domain"/>
    <property type="match status" value="1"/>
</dbReference>
<dbReference type="Gene3D" id="3.90.740.10">
    <property type="entry name" value="Valyl/Leucyl/Isoleucyl-tRNA synthetase, editing domain"/>
    <property type="match status" value="1"/>
</dbReference>
<dbReference type="HAMAP" id="MF_02004">
    <property type="entry name" value="Val_tRNA_synth_type1"/>
    <property type="match status" value="1"/>
</dbReference>
<dbReference type="InterPro" id="IPR001412">
    <property type="entry name" value="aa-tRNA-synth_I_CS"/>
</dbReference>
<dbReference type="InterPro" id="IPR002300">
    <property type="entry name" value="aa-tRNA-synth_Ia"/>
</dbReference>
<dbReference type="InterPro" id="IPR033705">
    <property type="entry name" value="Anticodon_Ia_Val"/>
</dbReference>
<dbReference type="InterPro" id="IPR013155">
    <property type="entry name" value="M/V/L/I-tRNA-synth_anticd-bd"/>
</dbReference>
<dbReference type="InterPro" id="IPR014729">
    <property type="entry name" value="Rossmann-like_a/b/a_fold"/>
</dbReference>
<dbReference type="InterPro" id="IPR010978">
    <property type="entry name" value="tRNA-bd_arm"/>
</dbReference>
<dbReference type="InterPro" id="IPR009080">
    <property type="entry name" value="tRNAsynth_Ia_anticodon-bd"/>
</dbReference>
<dbReference type="InterPro" id="IPR037118">
    <property type="entry name" value="Val-tRNA_synth_C_sf"/>
</dbReference>
<dbReference type="InterPro" id="IPR019499">
    <property type="entry name" value="Val-tRNA_synth_tRNA-bd"/>
</dbReference>
<dbReference type="InterPro" id="IPR009008">
    <property type="entry name" value="Val/Leu/Ile-tRNA-synth_edit"/>
</dbReference>
<dbReference type="InterPro" id="IPR002303">
    <property type="entry name" value="Valyl-tRNA_ligase"/>
</dbReference>
<dbReference type="NCBIfam" id="NF004349">
    <property type="entry name" value="PRK05729.1"/>
    <property type="match status" value="1"/>
</dbReference>
<dbReference type="NCBIfam" id="TIGR00422">
    <property type="entry name" value="valS"/>
    <property type="match status" value="1"/>
</dbReference>
<dbReference type="PANTHER" id="PTHR11946:SF93">
    <property type="entry name" value="VALINE--TRNA LIGASE, CHLOROPLASTIC_MITOCHONDRIAL 2"/>
    <property type="match status" value="1"/>
</dbReference>
<dbReference type="PANTHER" id="PTHR11946">
    <property type="entry name" value="VALYL-TRNA SYNTHETASES"/>
    <property type="match status" value="1"/>
</dbReference>
<dbReference type="Pfam" id="PF08264">
    <property type="entry name" value="Anticodon_1"/>
    <property type="match status" value="1"/>
</dbReference>
<dbReference type="Pfam" id="PF00133">
    <property type="entry name" value="tRNA-synt_1"/>
    <property type="match status" value="1"/>
</dbReference>
<dbReference type="Pfam" id="PF10458">
    <property type="entry name" value="Val_tRNA-synt_C"/>
    <property type="match status" value="1"/>
</dbReference>
<dbReference type="PRINTS" id="PR00986">
    <property type="entry name" value="TRNASYNTHVAL"/>
</dbReference>
<dbReference type="SUPFAM" id="SSF47323">
    <property type="entry name" value="Anticodon-binding domain of a subclass of class I aminoacyl-tRNA synthetases"/>
    <property type="match status" value="1"/>
</dbReference>
<dbReference type="SUPFAM" id="SSF52374">
    <property type="entry name" value="Nucleotidylyl transferase"/>
    <property type="match status" value="1"/>
</dbReference>
<dbReference type="SUPFAM" id="SSF46589">
    <property type="entry name" value="tRNA-binding arm"/>
    <property type="match status" value="1"/>
</dbReference>
<dbReference type="SUPFAM" id="SSF50677">
    <property type="entry name" value="ValRS/IleRS/LeuRS editing domain"/>
    <property type="match status" value="1"/>
</dbReference>
<dbReference type="PROSITE" id="PS00178">
    <property type="entry name" value="AA_TRNA_LIGASE_I"/>
    <property type="match status" value="1"/>
</dbReference>
<keyword id="KW-0030">Aminoacyl-tRNA synthetase</keyword>
<keyword id="KW-0067">ATP-binding</keyword>
<keyword id="KW-0175">Coiled coil</keyword>
<keyword id="KW-0963">Cytoplasm</keyword>
<keyword id="KW-0436">Ligase</keyword>
<keyword id="KW-0547">Nucleotide-binding</keyword>
<keyword id="KW-0648">Protein biosynthesis</keyword>
<keyword id="KW-1185">Reference proteome</keyword>
<sequence>MTTSLPPQYEPTVTEAKWQTAWEESHAFKADPDRPGEPYCVVIPPPNVTGSLHMGHAFESSLIDTLVRYHRMRGDNTLWLPGTDHASIAVQTILERQLKAEGKTRDDLGREKFLERAWQWKAESGSTIVNQLRRLGVSVDWTRERFTMDEGLSQAVKTAFIKLYEEGLIYRGNYLVNWCPASQSAVSDLEVENQEVDGHLWYFRYPLTDGSGELVVATTRPETMLGDTGVAVNPHDERYAAMVGKTITLPLVNREIPIVADELVDPEFGTGCVKVTPAHDPNDFVMGQRHNLPFINLLNKDGSLNENGGDFAGQDRFEARKNVVQALEAQGFLVKIEPYRHSVPYGDRGKVPVEPLLSTQWFVKIESLAQNALACLDEDNSPNFVPERWGKVYRDWLVKLKDWCISRQLWWGHQIPAWYVISETNGAITDHTPFIVAYDEAEALAKAKAEYGPTVQLQQDPDVLDTWFSSGLWPFSTMGWPEQTDDLAKYYPTSTLVTGFDIIFFWVARMTMMAGHFTGQIPFKDVYIHGLVRDENGKKMSKSANNGIDPLLLINKYGTDALRYTLIREVAGAGQDISLQYDRQKDESESVEASRNFANKLWNAARFVMMNLDGQTPQQLGLAPGEDLELADRWILSRLNQVIQQTREQIEDYGLGEAAKGLYEFIWGDFCDWYIELAKPRLWNKEGGDVGTQRQLVARQVLAHTLDSIIKLLHPFMPHITEELWQTLHQAEGQFLALQAYPTVNQSLVDPALETQFALLIETLRTIRNLRAEAGIKPGAMVTVILQSENDQERQTLQLGETYIRDIGKVENLQVVSQLPPEQTQAIAGVVDTIQVLIPLSGLVDLDILRNKIQKTLDKVTKEYESIEKRLSNPGFVNKAPEEVIAGAKESLNAAAVQRQMLQERLKMLG</sequence>
<proteinExistence type="inferred from homology"/>
<evidence type="ECO:0000255" key="1">
    <source>
        <dbReference type="HAMAP-Rule" id="MF_02004"/>
    </source>
</evidence>
<reference key="1">
    <citation type="journal article" date="1995" name="DNA Res.">
        <title>Sequence analysis of the genome of the unicellular cyanobacterium Synechocystis sp. strain PCC6803. I. Sequence features in the 1 Mb region from map positions 64% to 92% of the genome.</title>
        <authorList>
            <person name="Kaneko T."/>
            <person name="Tanaka A."/>
            <person name="Sato S."/>
            <person name="Kotani H."/>
            <person name="Sazuka T."/>
            <person name="Miyajima N."/>
            <person name="Sugiura M."/>
            <person name="Tabata S."/>
        </authorList>
    </citation>
    <scope>NUCLEOTIDE SEQUENCE [LARGE SCALE GENOMIC DNA]</scope>
    <source>
        <strain>ATCC 27184 / PCC 6803 / N-1</strain>
    </source>
</reference>
<reference key="2">
    <citation type="journal article" date="1996" name="DNA Res.">
        <title>Sequence analysis of the genome of the unicellular cyanobacterium Synechocystis sp. strain PCC6803. II. Sequence determination of the entire genome and assignment of potential protein-coding regions.</title>
        <authorList>
            <person name="Kaneko T."/>
            <person name="Sato S."/>
            <person name="Kotani H."/>
            <person name="Tanaka A."/>
            <person name="Asamizu E."/>
            <person name="Nakamura Y."/>
            <person name="Miyajima N."/>
            <person name="Hirosawa M."/>
            <person name="Sugiura M."/>
            <person name="Sasamoto S."/>
            <person name="Kimura T."/>
            <person name="Hosouchi T."/>
            <person name="Matsuno A."/>
            <person name="Muraki A."/>
            <person name="Nakazaki N."/>
            <person name="Naruo K."/>
            <person name="Okumura S."/>
            <person name="Shimpo S."/>
            <person name="Takeuchi C."/>
            <person name="Wada T."/>
            <person name="Watanabe A."/>
            <person name="Yamada M."/>
            <person name="Yasuda M."/>
            <person name="Tabata S."/>
        </authorList>
    </citation>
    <scope>NUCLEOTIDE SEQUENCE [LARGE SCALE GENOMIC DNA]</scope>
    <source>
        <strain>ATCC 27184 / PCC 6803 / Kazusa</strain>
    </source>
</reference>
<name>SYV_SYNY3</name>
<protein>
    <recommendedName>
        <fullName evidence="1">Valine--tRNA ligase</fullName>
        <ecNumber evidence="1">6.1.1.9</ecNumber>
    </recommendedName>
    <alternativeName>
        <fullName evidence="1">Valyl-tRNA synthetase</fullName>
        <shortName evidence="1">ValRS</shortName>
    </alternativeName>
</protein>
<organism>
    <name type="scientific">Synechocystis sp. (strain ATCC 27184 / PCC 6803 / Kazusa)</name>
    <dbReference type="NCBI Taxonomy" id="1111708"/>
    <lineage>
        <taxon>Bacteria</taxon>
        <taxon>Bacillati</taxon>
        <taxon>Cyanobacteriota</taxon>
        <taxon>Cyanophyceae</taxon>
        <taxon>Synechococcales</taxon>
        <taxon>Merismopediaceae</taxon>
        <taxon>Synechocystis</taxon>
    </lineage>
</organism>